<sequence length="283" mass="31598">MLIIETLPLLRQQIRRLRMEGKRVALVPTMGNLHDGHMKLVDEAKARADVVVVSIFVNPMQFDRPEDLARYPRTLQEDCEKLNKRKVDLVFAPSVKEIYPNGTETHTYVDVPGLSTMLEGASRPGHFRGVSTIVSKLFNLVQPDIACFGEKDFQQLALIRKMVADMGFDIEIVGVPIMRAKDGLALSSRNGYLTAEQRKIAPGLYKVLSSIADKLQAGERDLDEIITIAGQELNEKGFRADDIQIRDADTLLEVSETSKRAVILVAAWLGDARLIDNKMVELA</sequence>
<name>PANC_ECOSE</name>
<keyword id="KW-0067">ATP-binding</keyword>
<keyword id="KW-0963">Cytoplasm</keyword>
<keyword id="KW-0436">Ligase</keyword>
<keyword id="KW-0547">Nucleotide-binding</keyword>
<keyword id="KW-0566">Pantothenate biosynthesis</keyword>
<protein>
    <recommendedName>
        <fullName evidence="1">Pantothenate synthetase</fullName>
        <shortName evidence="1">PS</shortName>
        <ecNumber evidence="1">6.3.2.1</ecNumber>
    </recommendedName>
    <alternativeName>
        <fullName evidence="1">Pantoate--beta-alanine ligase</fullName>
    </alternativeName>
    <alternativeName>
        <fullName evidence="1">Pantoate-activating enzyme</fullName>
    </alternativeName>
</protein>
<accession>B6HZA8</accession>
<feature type="chain" id="PRO_1000097064" description="Pantothenate synthetase">
    <location>
        <begin position="1"/>
        <end position="283"/>
    </location>
</feature>
<feature type="active site" description="Proton donor" evidence="1">
    <location>
        <position position="37"/>
    </location>
</feature>
<feature type="binding site" evidence="1">
    <location>
        <begin position="30"/>
        <end position="37"/>
    </location>
    <ligand>
        <name>ATP</name>
        <dbReference type="ChEBI" id="CHEBI:30616"/>
    </ligand>
</feature>
<feature type="binding site" evidence="1">
    <location>
        <position position="61"/>
    </location>
    <ligand>
        <name>(R)-pantoate</name>
        <dbReference type="ChEBI" id="CHEBI:15980"/>
    </ligand>
</feature>
<feature type="binding site" evidence="1">
    <location>
        <position position="61"/>
    </location>
    <ligand>
        <name>beta-alanine</name>
        <dbReference type="ChEBI" id="CHEBI:57966"/>
    </ligand>
</feature>
<feature type="binding site" evidence="1">
    <location>
        <begin position="149"/>
        <end position="152"/>
    </location>
    <ligand>
        <name>ATP</name>
        <dbReference type="ChEBI" id="CHEBI:30616"/>
    </ligand>
</feature>
<feature type="binding site" evidence="1">
    <location>
        <position position="155"/>
    </location>
    <ligand>
        <name>(R)-pantoate</name>
        <dbReference type="ChEBI" id="CHEBI:15980"/>
    </ligand>
</feature>
<feature type="binding site" evidence="1">
    <location>
        <begin position="186"/>
        <end position="189"/>
    </location>
    <ligand>
        <name>ATP</name>
        <dbReference type="ChEBI" id="CHEBI:30616"/>
    </ligand>
</feature>
<proteinExistence type="inferred from homology"/>
<comment type="function">
    <text evidence="1">Catalyzes the condensation of pantoate with beta-alanine in an ATP-dependent reaction via a pantoyl-adenylate intermediate.</text>
</comment>
<comment type="catalytic activity">
    <reaction evidence="1">
        <text>(R)-pantoate + beta-alanine + ATP = (R)-pantothenate + AMP + diphosphate + H(+)</text>
        <dbReference type="Rhea" id="RHEA:10912"/>
        <dbReference type="ChEBI" id="CHEBI:15378"/>
        <dbReference type="ChEBI" id="CHEBI:15980"/>
        <dbReference type="ChEBI" id="CHEBI:29032"/>
        <dbReference type="ChEBI" id="CHEBI:30616"/>
        <dbReference type="ChEBI" id="CHEBI:33019"/>
        <dbReference type="ChEBI" id="CHEBI:57966"/>
        <dbReference type="ChEBI" id="CHEBI:456215"/>
        <dbReference type="EC" id="6.3.2.1"/>
    </reaction>
</comment>
<comment type="pathway">
    <text evidence="1">Cofactor biosynthesis; (R)-pantothenate biosynthesis; (R)-pantothenate from (R)-pantoate and beta-alanine: step 1/1.</text>
</comment>
<comment type="subunit">
    <text evidence="1">Homodimer.</text>
</comment>
<comment type="subcellular location">
    <subcellularLocation>
        <location evidence="1">Cytoplasm</location>
    </subcellularLocation>
</comment>
<comment type="miscellaneous">
    <text evidence="1">The reaction proceeds by a bi uni uni bi ping pong mechanism.</text>
</comment>
<comment type="similarity">
    <text evidence="1">Belongs to the pantothenate synthetase family.</text>
</comment>
<organism>
    <name type="scientific">Escherichia coli (strain SE11)</name>
    <dbReference type="NCBI Taxonomy" id="409438"/>
    <lineage>
        <taxon>Bacteria</taxon>
        <taxon>Pseudomonadati</taxon>
        <taxon>Pseudomonadota</taxon>
        <taxon>Gammaproteobacteria</taxon>
        <taxon>Enterobacterales</taxon>
        <taxon>Enterobacteriaceae</taxon>
        <taxon>Escherichia</taxon>
    </lineage>
</organism>
<dbReference type="EC" id="6.3.2.1" evidence="1"/>
<dbReference type="EMBL" id="AP009240">
    <property type="protein sequence ID" value="BAG75657.1"/>
    <property type="molecule type" value="Genomic_DNA"/>
</dbReference>
<dbReference type="RefSeq" id="WP_000905383.1">
    <property type="nucleotide sequence ID" value="NC_011415.1"/>
</dbReference>
<dbReference type="SMR" id="B6HZA8"/>
<dbReference type="GeneID" id="75202052"/>
<dbReference type="KEGG" id="ecy:ECSE_0133"/>
<dbReference type="HOGENOM" id="CLU_047148_0_0_6"/>
<dbReference type="UniPathway" id="UPA00028">
    <property type="reaction ID" value="UER00005"/>
</dbReference>
<dbReference type="Proteomes" id="UP000008199">
    <property type="component" value="Chromosome"/>
</dbReference>
<dbReference type="GO" id="GO:0005829">
    <property type="term" value="C:cytosol"/>
    <property type="evidence" value="ECO:0007669"/>
    <property type="project" value="TreeGrafter"/>
</dbReference>
<dbReference type="GO" id="GO:0005524">
    <property type="term" value="F:ATP binding"/>
    <property type="evidence" value="ECO:0007669"/>
    <property type="project" value="UniProtKB-KW"/>
</dbReference>
<dbReference type="GO" id="GO:0004592">
    <property type="term" value="F:pantoate-beta-alanine ligase activity"/>
    <property type="evidence" value="ECO:0007669"/>
    <property type="project" value="UniProtKB-UniRule"/>
</dbReference>
<dbReference type="GO" id="GO:0015940">
    <property type="term" value="P:pantothenate biosynthetic process"/>
    <property type="evidence" value="ECO:0007669"/>
    <property type="project" value="UniProtKB-UniRule"/>
</dbReference>
<dbReference type="CDD" id="cd00560">
    <property type="entry name" value="PanC"/>
    <property type="match status" value="1"/>
</dbReference>
<dbReference type="FunFam" id="3.30.1300.10:FF:000001">
    <property type="entry name" value="Pantothenate synthetase"/>
    <property type="match status" value="1"/>
</dbReference>
<dbReference type="FunFam" id="3.40.50.620:FF:000013">
    <property type="entry name" value="Pantothenate synthetase"/>
    <property type="match status" value="1"/>
</dbReference>
<dbReference type="Gene3D" id="3.40.50.620">
    <property type="entry name" value="HUPs"/>
    <property type="match status" value="1"/>
</dbReference>
<dbReference type="Gene3D" id="3.30.1300.10">
    <property type="entry name" value="Pantoate-beta-alanine ligase, C-terminal domain"/>
    <property type="match status" value="1"/>
</dbReference>
<dbReference type="HAMAP" id="MF_00158">
    <property type="entry name" value="PanC"/>
    <property type="match status" value="1"/>
</dbReference>
<dbReference type="InterPro" id="IPR004821">
    <property type="entry name" value="Cyt_trans-like"/>
</dbReference>
<dbReference type="InterPro" id="IPR003721">
    <property type="entry name" value="Pantoate_ligase"/>
</dbReference>
<dbReference type="InterPro" id="IPR042176">
    <property type="entry name" value="Pantoate_ligase_C"/>
</dbReference>
<dbReference type="InterPro" id="IPR014729">
    <property type="entry name" value="Rossmann-like_a/b/a_fold"/>
</dbReference>
<dbReference type="NCBIfam" id="TIGR00125">
    <property type="entry name" value="cyt_tran_rel"/>
    <property type="match status" value="1"/>
</dbReference>
<dbReference type="NCBIfam" id="TIGR00018">
    <property type="entry name" value="panC"/>
    <property type="match status" value="1"/>
</dbReference>
<dbReference type="PANTHER" id="PTHR21299">
    <property type="entry name" value="CYTIDYLATE KINASE/PANTOATE-BETA-ALANINE LIGASE"/>
    <property type="match status" value="1"/>
</dbReference>
<dbReference type="PANTHER" id="PTHR21299:SF1">
    <property type="entry name" value="PANTOATE--BETA-ALANINE LIGASE"/>
    <property type="match status" value="1"/>
</dbReference>
<dbReference type="Pfam" id="PF02569">
    <property type="entry name" value="Pantoate_ligase"/>
    <property type="match status" value="1"/>
</dbReference>
<dbReference type="SUPFAM" id="SSF52374">
    <property type="entry name" value="Nucleotidylyl transferase"/>
    <property type="match status" value="1"/>
</dbReference>
<evidence type="ECO:0000255" key="1">
    <source>
        <dbReference type="HAMAP-Rule" id="MF_00158"/>
    </source>
</evidence>
<gene>
    <name evidence="1" type="primary">panC</name>
    <name type="ordered locus">ECSE_0133</name>
</gene>
<reference key="1">
    <citation type="journal article" date="2008" name="DNA Res.">
        <title>Complete genome sequence and comparative analysis of the wild-type commensal Escherichia coli strain SE11 isolated from a healthy adult.</title>
        <authorList>
            <person name="Oshima K."/>
            <person name="Toh H."/>
            <person name="Ogura Y."/>
            <person name="Sasamoto H."/>
            <person name="Morita H."/>
            <person name="Park S.-H."/>
            <person name="Ooka T."/>
            <person name="Iyoda S."/>
            <person name="Taylor T.D."/>
            <person name="Hayashi T."/>
            <person name="Itoh K."/>
            <person name="Hattori M."/>
        </authorList>
    </citation>
    <scope>NUCLEOTIDE SEQUENCE [LARGE SCALE GENOMIC DNA]</scope>
    <source>
        <strain>SE11</strain>
    </source>
</reference>